<keyword id="KW-0687">Ribonucleoprotein</keyword>
<keyword id="KW-0689">Ribosomal protein</keyword>
<keyword id="KW-0694">RNA-binding</keyword>
<keyword id="KW-0699">rRNA-binding</keyword>
<comment type="function">
    <text evidence="1">This protein binds specifically to 23S rRNA; its binding is stimulated by other ribosomal proteins, e.g. L4, L17, and L20. It is important during the early stages of 50S assembly. It makes multiple contacts with different domains of the 23S rRNA in the assembled 50S subunit and ribosome (By similarity).</text>
</comment>
<comment type="function">
    <text evidence="1">The globular domain of the protein is located near the polypeptide exit tunnel on the outside of the subunit, while an extended beta-hairpin is found that lines the wall of the exit tunnel in the center of the 70S ribosome.</text>
</comment>
<comment type="subunit">
    <text evidence="1">Part of the 50S ribosomal subunit.</text>
</comment>
<comment type="similarity">
    <text evidence="1">Belongs to the universal ribosomal protein uL22 family.</text>
</comment>
<dbReference type="EMBL" id="CP000109">
    <property type="protein sequence ID" value="ABB40896.1"/>
    <property type="molecule type" value="Genomic_DNA"/>
</dbReference>
<dbReference type="SMR" id="Q31IX7"/>
<dbReference type="STRING" id="317025.Tcr_0300"/>
<dbReference type="KEGG" id="tcx:Tcr_0300"/>
<dbReference type="eggNOG" id="COG0091">
    <property type="taxonomic scope" value="Bacteria"/>
</dbReference>
<dbReference type="HOGENOM" id="CLU_083987_3_3_6"/>
<dbReference type="OrthoDB" id="9805969at2"/>
<dbReference type="GO" id="GO:0022625">
    <property type="term" value="C:cytosolic large ribosomal subunit"/>
    <property type="evidence" value="ECO:0007669"/>
    <property type="project" value="TreeGrafter"/>
</dbReference>
<dbReference type="GO" id="GO:0019843">
    <property type="term" value="F:rRNA binding"/>
    <property type="evidence" value="ECO:0007669"/>
    <property type="project" value="UniProtKB-UniRule"/>
</dbReference>
<dbReference type="GO" id="GO:0003735">
    <property type="term" value="F:structural constituent of ribosome"/>
    <property type="evidence" value="ECO:0007669"/>
    <property type="project" value="InterPro"/>
</dbReference>
<dbReference type="GO" id="GO:0006412">
    <property type="term" value="P:translation"/>
    <property type="evidence" value="ECO:0007669"/>
    <property type="project" value="UniProtKB-UniRule"/>
</dbReference>
<dbReference type="CDD" id="cd00336">
    <property type="entry name" value="Ribosomal_L22"/>
    <property type="match status" value="1"/>
</dbReference>
<dbReference type="FunFam" id="3.90.470.10:FF:000001">
    <property type="entry name" value="50S ribosomal protein L22"/>
    <property type="match status" value="1"/>
</dbReference>
<dbReference type="Gene3D" id="3.90.470.10">
    <property type="entry name" value="Ribosomal protein L22/L17"/>
    <property type="match status" value="1"/>
</dbReference>
<dbReference type="HAMAP" id="MF_01331_B">
    <property type="entry name" value="Ribosomal_uL22_B"/>
    <property type="match status" value="1"/>
</dbReference>
<dbReference type="InterPro" id="IPR001063">
    <property type="entry name" value="Ribosomal_uL22"/>
</dbReference>
<dbReference type="InterPro" id="IPR005727">
    <property type="entry name" value="Ribosomal_uL22_bac/chlpt-type"/>
</dbReference>
<dbReference type="InterPro" id="IPR047867">
    <property type="entry name" value="Ribosomal_uL22_bac/org-type"/>
</dbReference>
<dbReference type="InterPro" id="IPR018260">
    <property type="entry name" value="Ribosomal_uL22_CS"/>
</dbReference>
<dbReference type="InterPro" id="IPR036394">
    <property type="entry name" value="Ribosomal_uL22_sf"/>
</dbReference>
<dbReference type="NCBIfam" id="TIGR01044">
    <property type="entry name" value="rplV_bact"/>
    <property type="match status" value="1"/>
</dbReference>
<dbReference type="PANTHER" id="PTHR13501">
    <property type="entry name" value="CHLOROPLAST 50S RIBOSOMAL PROTEIN L22-RELATED"/>
    <property type="match status" value="1"/>
</dbReference>
<dbReference type="PANTHER" id="PTHR13501:SF8">
    <property type="entry name" value="LARGE RIBOSOMAL SUBUNIT PROTEIN UL22M"/>
    <property type="match status" value="1"/>
</dbReference>
<dbReference type="Pfam" id="PF00237">
    <property type="entry name" value="Ribosomal_L22"/>
    <property type="match status" value="1"/>
</dbReference>
<dbReference type="SUPFAM" id="SSF54843">
    <property type="entry name" value="Ribosomal protein L22"/>
    <property type="match status" value="1"/>
</dbReference>
<dbReference type="PROSITE" id="PS00464">
    <property type="entry name" value="RIBOSOMAL_L22"/>
    <property type="match status" value="1"/>
</dbReference>
<name>RL22_HYDCU</name>
<feature type="chain" id="PRO_0000243224" description="Large ribosomal subunit protein uL22">
    <location>
        <begin position="1"/>
        <end position="110"/>
    </location>
</feature>
<organism>
    <name type="scientific">Hydrogenovibrio crunogenus (strain DSM 25203 / XCL-2)</name>
    <name type="common">Thiomicrospira crunogena</name>
    <dbReference type="NCBI Taxonomy" id="317025"/>
    <lineage>
        <taxon>Bacteria</taxon>
        <taxon>Pseudomonadati</taxon>
        <taxon>Pseudomonadota</taxon>
        <taxon>Gammaproteobacteria</taxon>
        <taxon>Thiotrichales</taxon>
        <taxon>Piscirickettsiaceae</taxon>
        <taxon>Hydrogenovibrio</taxon>
    </lineage>
</organism>
<sequence length="110" mass="12117">MQVSATHRFARISPQKARLVADLIRGKDVETAVNILAFSDKKASELMSKVLNSAIANAENNEGADIDELKVTEAYVNEGPIMKRMRARAKGRGNRILKRISHITVTVGDK</sequence>
<accession>Q31IX7</accession>
<protein>
    <recommendedName>
        <fullName evidence="1">Large ribosomal subunit protein uL22</fullName>
    </recommendedName>
    <alternativeName>
        <fullName evidence="2">50S ribosomal protein L22</fullName>
    </alternativeName>
</protein>
<reference key="1">
    <citation type="journal article" date="2006" name="PLoS Biol.">
        <title>The genome of deep-sea vent chemolithoautotroph Thiomicrospira crunogena XCL-2.</title>
        <authorList>
            <person name="Scott K.M."/>
            <person name="Sievert S.M."/>
            <person name="Abril F.N."/>
            <person name="Ball L.A."/>
            <person name="Barrett C.J."/>
            <person name="Blake R.A."/>
            <person name="Boller A.J."/>
            <person name="Chain P.S.G."/>
            <person name="Clark J.A."/>
            <person name="Davis C.R."/>
            <person name="Detter C."/>
            <person name="Do K.F."/>
            <person name="Dobrinski K.P."/>
            <person name="Faza B.I."/>
            <person name="Fitzpatrick K.A."/>
            <person name="Freyermuth S.K."/>
            <person name="Harmer T.L."/>
            <person name="Hauser L.J."/>
            <person name="Huegler M."/>
            <person name="Kerfeld C.A."/>
            <person name="Klotz M.G."/>
            <person name="Kong W.W."/>
            <person name="Land M."/>
            <person name="Lapidus A."/>
            <person name="Larimer F.W."/>
            <person name="Longo D.L."/>
            <person name="Lucas S."/>
            <person name="Malfatti S.A."/>
            <person name="Massey S.E."/>
            <person name="Martin D.D."/>
            <person name="McCuddin Z."/>
            <person name="Meyer F."/>
            <person name="Moore J.L."/>
            <person name="Ocampo L.H. Jr."/>
            <person name="Paul J.H."/>
            <person name="Paulsen I.T."/>
            <person name="Reep D.K."/>
            <person name="Ren Q."/>
            <person name="Ross R.L."/>
            <person name="Sato P.Y."/>
            <person name="Thomas P."/>
            <person name="Tinkham L.E."/>
            <person name="Zeruth G.T."/>
        </authorList>
    </citation>
    <scope>NUCLEOTIDE SEQUENCE [LARGE SCALE GENOMIC DNA]</scope>
    <source>
        <strain>DSM 25203 / XCL-2</strain>
    </source>
</reference>
<gene>
    <name evidence="1" type="primary">rplV</name>
    <name type="ordered locus">Tcr_0300</name>
</gene>
<evidence type="ECO:0000255" key="1">
    <source>
        <dbReference type="HAMAP-Rule" id="MF_01331"/>
    </source>
</evidence>
<evidence type="ECO:0000305" key="2"/>
<proteinExistence type="inferred from homology"/>